<proteinExistence type="evidence at transcript level"/>
<comment type="function">
    <text evidence="1 3">Photoreceptor required for image-forming vision at low light intensity. Required for photoreceptor cell viability after birth (By similarity). Light-induced isomerization of 11-cis to all-trans retinal triggers a conformational change that activates signaling via G-proteins. Subsequent receptor phosphorylation mediates displacement of the bound G-protein alpha subunit by the arrestin SAG and terminates signaling (By similarity).</text>
</comment>
<comment type="subunit">
    <text evidence="1 3">Homodimer. Interacts (phosphorylated form) with SAG. Interacts with GNAT1. Interacts with GNAT3. SAG and G-proteins compete for a common binding site. Interacts with GRK1. Interacts with PRCD; the interaction promotes PRCD stability. Forms a complex with ASAP1 and ARF4. Forms a complex with ASAP1, RAB11A, Rabin8/RAB3IP, ARF4 and RAB11FIP3; the complex regulates Golgi-to-cilia rhodopsin/RHO transport in photoreceptors (By similarity).</text>
</comment>
<comment type="subcellular location">
    <subcellularLocation>
        <location evidence="1">Membrane</location>
        <topology evidence="1">Multi-pass membrane protein</topology>
    </subcellularLocation>
    <subcellularLocation>
        <location evidence="1">Cell projection</location>
        <location evidence="1">Cilium</location>
        <location evidence="1">Photoreceptor outer segment</location>
    </subcellularLocation>
    <text evidence="3">Synthesized in the inner segment (IS) of rod photoreceptor cells before vectorial transport to disk membranes in the rod outer segment (OS) photosensory cilia.</text>
</comment>
<comment type="PTM">
    <text evidence="1">Phosphorylated on some or all of the serine and threonine residues present in the C-terminal region.</text>
</comment>
<comment type="PTM">
    <text evidence="1">Contains one covalently linked retinal chromophore. Upon light absorption, the covalently bound 11-cis-retinal is converted to all-trans-retinal. After hydrolysis of the Schiff base and release of the covalently bound all-trans-retinal, active rhodopsin is regenerated by binding of a fresh molecule of 11-cis-retinal.</text>
</comment>
<comment type="similarity">
    <text evidence="5">Belongs to the G-protein coupled receptor 1 family. Opsin subfamily.</text>
</comment>
<feature type="chain" id="PRO_0000197697" description="Rhodopsin">
    <location>
        <begin position="1"/>
        <end position="348"/>
    </location>
</feature>
<feature type="topological domain" description="Extracellular" evidence="6">
    <location>
        <begin position="1"/>
        <end position="36"/>
    </location>
</feature>
<feature type="transmembrane region" description="Helical; Name=1" evidence="1">
    <location>
        <begin position="37"/>
        <end position="61"/>
    </location>
</feature>
<feature type="topological domain" description="Cytoplasmic" evidence="6">
    <location>
        <begin position="62"/>
        <end position="73"/>
    </location>
</feature>
<feature type="transmembrane region" description="Helical; Name=2" evidence="1">
    <location>
        <begin position="74"/>
        <end position="96"/>
    </location>
</feature>
<feature type="topological domain" description="Extracellular" evidence="6">
    <location>
        <begin position="97"/>
        <end position="110"/>
    </location>
</feature>
<feature type="transmembrane region" description="Helical; Name=3" evidence="1">
    <location>
        <begin position="111"/>
        <end position="133"/>
    </location>
</feature>
<feature type="topological domain" description="Cytoplasmic" evidence="6">
    <location>
        <begin position="134"/>
        <end position="152"/>
    </location>
</feature>
<feature type="transmembrane region" description="Helical; Name=4" evidence="1">
    <location>
        <begin position="153"/>
        <end position="173"/>
    </location>
</feature>
<feature type="topological domain" description="Extracellular" evidence="6">
    <location>
        <begin position="174"/>
        <end position="202"/>
    </location>
</feature>
<feature type="transmembrane region" description="Helical; Name=5" evidence="1">
    <location>
        <begin position="203"/>
        <end position="224"/>
    </location>
</feature>
<feature type="topological domain" description="Cytoplasmic" evidence="6">
    <location>
        <begin position="225"/>
        <end position="252"/>
    </location>
</feature>
<feature type="transmembrane region" description="Helical; Name=6" evidence="1">
    <location>
        <begin position="253"/>
        <end position="274"/>
    </location>
</feature>
<feature type="topological domain" description="Extracellular" evidence="6">
    <location>
        <begin position="275"/>
        <end position="286"/>
    </location>
</feature>
<feature type="transmembrane region" description="Helical; Name=7" evidence="1">
    <location>
        <begin position="287"/>
        <end position="308"/>
    </location>
</feature>
<feature type="topological domain" description="Cytoplasmic" evidence="6">
    <location>
        <begin position="309"/>
        <end position="348"/>
    </location>
</feature>
<feature type="region of interest" description="Interaction with SAG" evidence="1">
    <location>
        <begin position="330"/>
        <end position="348"/>
    </location>
</feature>
<feature type="short sequence motif" description="'Ionic lock' involved in activated form stabilization" evidence="1">
    <location>
        <begin position="134"/>
        <end position="136"/>
    </location>
</feature>
<feature type="binding site" evidence="1">
    <location>
        <position position="201"/>
    </location>
    <ligand>
        <name>Zn(2+)</name>
        <dbReference type="ChEBI" id="CHEBI:29105"/>
    </ligand>
</feature>
<feature type="binding site" evidence="1">
    <location>
        <position position="279"/>
    </location>
    <ligand>
        <name>Zn(2+)</name>
        <dbReference type="ChEBI" id="CHEBI:29105"/>
    </ligand>
</feature>
<feature type="site" description="Plays an important role in the conformation switch to the active conformation" evidence="1">
    <location>
        <position position="113"/>
    </location>
</feature>
<feature type="modified residue" description="N-acetylmethionine" evidence="1">
    <location>
        <position position="1"/>
    </location>
</feature>
<feature type="modified residue" description="N6-(retinylidene)lysine" evidence="1">
    <location>
        <position position="296"/>
    </location>
</feature>
<feature type="modified residue" description="Phosphoserine" evidence="2">
    <location>
        <position position="334"/>
    </location>
</feature>
<feature type="modified residue" description="Phosphoserine" evidence="2">
    <location>
        <position position="338"/>
    </location>
</feature>
<feature type="modified residue" description="Phosphothreonine" evidence="1">
    <location>
        <position position="340"/>
    </location>
</feature>
<feature type="modified residue" description="Phosphothreonine" evidence="1">
    <location>
        <position position="342"/>
    </location>
</feature>
<feature type="modified residue" description="Phosphoserine" evidence="1">
    <location>
        <position position="343"/>
    </location>
</feature>
<feature type="lipid moiety-binding region" description="S-palmitoyl cysteine" evidence="1">
    <location>
        <position position="322"/>
    </location>
</feature>
<feature type="lipid moiety-binding region" description="S-palmitoyl cysteine" evidence="1">
    <location>
        <position position="323"/>
    </location>
</feature>
<feature type="glycosylation site" description="N-linked (GlcNAc...) asparagine" evidence="4">
    <location>
        <position position="2"/>
    </location>
</feature>
<feature type="glycosylation site" description="N-linked (GlcNAc...) asparagine" evidence="4">
    <location>
        <position position="15"/>
    </location>
</feature>
<feature type="disulfide bond" evidence="5">
    <location>
        <begin position="110"/>
        <end position="187"/>
    </location>
</feature>
<sequence length="348" mass="38999">MNGTEGPNFYVPFSNKTGVVRSPFEYPQYYLAEPWQFSMLAAYMFLLIVLGFPINFLTLYVTVQHKKLRTPLNYILLNLAVADLFMVFGGFTTTLYTSLHGYFVFGPTGCNLEGFFATLGGEIALWSLVVLAIERYVVVCKPMSNFRFGENHAIMGVGLTWVMALACAAPPLVGWSRYIPEGMQCSCGIDYYTLKPEVNNESFVIYMFVVHFTIPMIVIFFCYGQLVFTVKEAAAQQQESATTQKAEKEVTRMVIIMVIAFLICWVPYASVAFYIFTHQGFNFGPIFMTLPAFFAKAAAIYNPVIYIMMNKQFRTCMITTLCCGKNPLGDDEVSASASKTETSQVAPA</sequence>
<protein>
    <recommendedName>
        <fullName>Rhodopsin</fullName>
    </recommendedName>
</protein>
<evidence type="ECO:0000250" key="1">
    <source>
        <dbReference type="UniProtKB" id="P02699"/>
    </source>
</evidence>
<evidence type="ECO:0000250" key="2">
    <source>
        <dbReference type="UniProtKB" id="P02700"/>
    </source>
</evidence>
<evidence type="ECO:0000250" key="3">
    <source>
        <dbReference type="UniProtKB" id="P08100"/>
    </source>
</evidence>
<evidence type="ECO:0000255" key="4"/>
<evidence type="ECO:0000255" key="5">
    <source>
        <dbReference type="PROSITE-ProRule" id="PRU00521"/>
    </source>
</evidence>
<evidence type="ECO:0000305" key="6"/>
<reference key="1">
    <citation type="submission" date="1998-03" db="EMBL/GenBank/DDBJ databases">
        <authorList>
            <person name="Fasick J.I."/>
            <person name="Robinson P.R."/>
        </authorList>
    </citation>
    <scope>NUCLEOTIDE SEQUENCE [MRNA]</scope>
</reference>
<name>OPSD_PAGGO</name>
<keyword id="KW-0007">Acetylation</keyword>
<keyword id="KW-0966">Cell projection</keyword>
<keyword id="KW-0157">Chromophore</keyword>
<keyword id="KW-1015">Disulfide bond</keyword>
<keyword id="KW-0297">G-protein coupled receptor</keyword>
<keyword id="KW-0325">Glycoprotein</keyword>
<keyword id="KW-0449">Lipoprotein</keyword>
<keyword id="KW-0472">Membrane</keyword>
<keyword id="KW-0479">Metal-binding</keyword>
<keyword id="KW-0564">Palmitate</keyword>
<keyword id="KW-0597">Phosphoprotein</keyword>
<keyword id="KW-0600">Photoreceptor protein</keyword>
<keyword id="KW-0675">Receptor</keyword>
<keyword id="KW-0681">Retinal protein</keyword>
<keyword id="KW-0716">Sensory transduction</keyword>
<keyword id="KW-0807">Transducer</keyword>
<keyword id="KW-0812">Transmembrane</keyword>
<keyword id="KW-1133">Transmembrane helix</keyword>
<keyword id="KW-0844">Vision</keyword>
<keyword id="KW-0862">Zinc</keyword>
<dbReference type="EMBL" id="AF055318">
    <property type="protein sequence ID" value="AAC12765.1"/>
    <property type="molecule type" value="mRNA"/>
</dbReference>
<dbReference type="BMRB" id="O62795"/>
<dbReference type="SMR" id="O62795"/>
<dbReference type="GlyCosmos" id="O62795">
    <property type="glycosylation" value="2 sites, No reported glycans"/>
</dbReference>
<dbReference type="GO" id="GO:0016020">
    <property type="term" value="C:membrane"/>
    <property type="evidence" value="ECO:0000250"/>
    <property type="project" value="UniProtKB"/>
</dbReference>
<dbReference type="GO" id="GO:0097381">
    <property type="term" value="C:photoreceptor disc membrane"/>
    <property type="evidence" value="ECO:0000250"/>
    <property type="project" value="UniProtKB"/>
</dbReference>
<dbReference type="GO" id="GO:0060342">
    <property type="term" value="C:photoreceptor inner segment membrane"/>
    <property type="evidence" value="ECO:0000250"/>
    <property type="project" value="UniProtKB"/>
</dbReference>
<dbReference type="GO" id="GO:0042622">
    <property type="term" value="C:photoreceptor outer segment membrane"/>
    <property type="evidence" value="ECO:0000250"/>
    <property type="project" value="UniProtKB"/>
</dbReference>
<dbReference type="GO" id="GO:0005886">
    <property type="term" value="C:plasma membrane"/>
    <property type="evidence" value="ECO:0000250"/>
    <property type="project" value="UniProtKB"/>
</dbReference>
<dbReference type="GO" id="GO:0005502">
    <property type="term" value="F:11-cis retinal binding"/>
    <property type="evidence" value="ECO:0000250"/>
    <property type="project" value="UniProtKB"/>
</dbReference>
<dbReference type="GO" id="GO:0008020">
    <property type="term" value="F:G protein-coupled photoreceptor activity"/>
    <property type="evidence" value="ECO:0000250"/>
    <property type="project" value="UniProtKB"/>
</dbReference>
<dbReference type="GO" id="GO:0046872">
    <property type="term" value="F:metal ion binding"/>
    <property type="evidence" value="ECO:0007669"/>
    <property type="project" value="UniProtKB-KW"/>
</dbReference>
<dbReference type="GO" id="GO:0016038">
    <property type="term" value="P:absorption of visible light"/>
    <property type="evidence" value="ECO:0000250"/>
    <property type="project" value="AgBase"/>
</dbReference>
<dbReference type="GO" id="GO:0016056">
    <property type="term" value="P:G protein-coupled opsin signaling pathway"/>
    <property type="evidence" value="ECO:0000250"/>
    <property type="project" value="UniProtKB"/>
</dbReference>
<dbReference type="GO" id="GO:0007601">
    <property type="term" value="P:visual perception"/>
    <property type="evidence" value="ECO:0007669"/>
    <property type="project" value="UniProtKB-KW"/>
</dbReference>
<dbReference type="CDD" id="cd15080">
    <property type="entry name" value="7tmA_MWS_opsin"/>
    <property type="match status" value="1"/>
</dbReference>
<dbReference type="FunFam" id="1.20.1070.10:FF:000018">
    <property type="entry name" value="Rhodopsin"/>
    <property type="match status" value="1"/>
</dbReference>
<dbReference type="Gene3D" id="1.20.1070.10">
    <property type="entry name" value="Rhodopsin 7-helix transmembrane proteins"/>
    <property type="match status" value="1"/>
</dbReference>
<dbReference type="InterPro" id="IPR050125">
    <property type="entry name" value="GPCR_opsins"/>
</dbReference>
<dbReference type="InterPro" id="IPR000276">
    <property type="entry name" value="GPCR_Rhodpsn"/>
</dbReference>
<dbReference type="InterPro" id="IPR017452">
    <property type="entry name" value="GPCR_Rhodpsn_7TM"/>
</dbReference>
<dbReference type="InterPro" id="IPR001760">
    <property type="entry name" value="Opsin"/>
</dbReference>
<dbReference type="InterPro" id="IPR027430">
    <property type="entry name" value="Retinal_BS"/>
</dbReference>
<dbReference type="InterPro" id="IPR000732">
    <property type="entry name" value="Rhodopsin"/>
</dbReference>
<dbReference type="InterPro" id="IPR019477">
    <property type="entry name" value="Rhodopsin_N"/>
</dbReference>
<dbReference type="PANTHER" id="PTHR24240">
    <property type="entry name" value="OPSIN"/>
    <property type="match status" value="1"/>
</dbReference>
<dbReference type="Pfam" id="PF00001">
    <property type="entry name" value="7tm_1"/>
    <property type="match status" value="1"/>
</dbReference>
<dbReference type="Pfam" id="PF10413">
    <property type="entry name" value="Rhodopsin_N"/>
    <property type="match status" value="1"/>
</dbReference>
<dbReference type="PRINTS" id="PR00237">
    <property type="entry name" value="GPCRRHODOPSN"/>
</dbReference>
<dbReference type="PRINTS" id="PR00238">
    <property type="entry name" value="OPSIN"/>
</dbReference>
<dbReference type="PRINTS" id="PR00579">
    <property type="entry name" value="RHODOPSIN"/>
</dbReference>
<dbReference type="SUPFAM" id="SSF81321">
    <property type="entry name" value="Family A G protein-coupled receptor-like"/>
    <property type="match status" value="1"/>
</dbReference>
<dbReference type="PROSITE" id="PS00237">
    <property type="entry name" value="G_PROTEIN_RECEP_F1_1"/>
    <property type="match status" value="1"/>
</dbReference>
<dbReference type="PROSITE" id="PS50262">
    <property type="entry name" value="G_PROTEIN_RECEP_F1_2"/>
    <property type="match status" value="1"/>
</dbReference>
<dbReference type="PROSITE" id="PS00238">
    <property type="entry name" value="OPSIN"/>
    <property type="match status" value="1"/>
</dbReference>
<gene>
    <name type="primary">RHO</name>
</gene>
<organism>
    <name type="scientific">Pagophilus groenlandicus</name>
    <name type="common">Harp seal</name>
    <name type="synonym">Phoca groenlandica</name>
    <dbReference type="NCBI Taxonomy" id="39089"/>
    <lineage>
        <taxon>Eukaryota</taxon>
        <taxon>Metazoa</taxon>
        <taxon>Chordata</taxon>
        <taxon>Craniata</taxon>
        <taxon>Vertebrata</taxon>
        <taxon>Euteleostomi</taxon>
        <taxon>Mammalia</taxon>
        <taxon>Eutheria</taxon>
        <taxon>Laurasiatheria</taxon>
        <taxon>Carnivora</taxon>
        <taxon>Caniformia</taxon>
        <taxon>Pinnipedia</taxon>
        <taxon>Phocidae</taxon>
        <taxon>Phocinae</taxon>
        <taxon>Phoca</taxon>
    </lineage>
</organism>
<accession>O62795</accession>